<protein>
    <recommendedName>
        <fullName>Zinc fingers and homeoboxes protein 3</fullName>
    </recommendedName>
    <alternativeName>
        <fullName>Triple homeobox protein 1</fullName>
    </alternativeName>
    <alternativeName>
        <fullName>Zinc finger and homeodomain protein 3</fullName>
    </alternativeName>
</protein>
<sequence>MASKRKSTTPCMIPVKTVVLQDASMEAQPAETLPEGPQQDLPPEASAASSEAAQNPSSTDGSTLANGHRSTLDGYLYSCKYCDFRSHDMTQFVGHMNSEHTDFNKDPTFVCSGCSFLAKTPEGLSLHNATCHSGEASFVWNVAKPDNHVVVEQSIPESTSTPDLAGEPSAEGADGQAEIIITKTPIMKIMKGKAEAKKIHTLKENVPSQPVGEALPKLSTGEMEVREGDHSFINGAVPVSQASASSAKNPHAANGPLIGTVPVLPAGIAQFLSLQQQPPVHAQHHVHQPLPTAKALPKVMIPLSSIPTYNAAMDSNSFLKNSFHKFPYPTKAELCYLTVVTKYPEEQLKIWFTAQRLKQGISWSPEEIEDARKKMFNTVIQSVPQPTITVLNTPLVASAGNVQHLIQAALPGHVVGQPEGTGGGLLVTQPLMANGLQATSSPLPLTVTSVPKQPGVAPINTVCSNTTSAVKVVNAAQSLLTACPSITSQAFLDASIYKNKKSHEQLSALKGSFCRNQFPGQSEVEHLTKVTGLSTREVRKWFSDRRYHCRNLKGSRAMIPGDHSSIIIDSVPEVSFSPSSKVPEVTCIPTTATLATHPSAKRQSWHQTPDFTPTKYKERAPEQLRALESSFAQNPLPLDEELDRLRSETKMTRREIDSWFSERRKKVNAEETKKAEENASQEEEEAAEDEGGEEDLASELRVSGENGSLEMPSSHILAERKVSPIKINLKNLRVTEANGRNEIPGLGACDPEDDESNKLAEQLPGKVSCKKTAQQRHLLRQLFVQTQWPSNQDYDSIMAQTGLPRPEVVRWFGDSRYALKNGQLKWYEDYKRGNFPPGLLVIAPGNRELLQDYYMTHKMLYEEDLQNLCDKTQMSSQQVKQWFAEKMGEETRAVADTGSEDQGPGTGELTAVHKGMGDTYSEVSENSESWEPRVPEASSEPFDTSSPQAGRQLETD</sequence>
<accession>Q9H4I2</accession>
<accession>E1P5W5</accession>
<accession>F5H820</accession>
<accession>O43145</accession>
<accession>Q6NUJ7</accession>
<feature type="chain" id="PRO_0000049395" description="Zinc fingers and homeoboxes protein 3">
    <location>
        <begin position="1"/>
        <end position="956"/>
    </location>
</feature>
<feature type="zinc finger region" description="C2H2-type 1">
    <location>
        <begin position="77"/>
        <end position="100"/>
    </location>
</feature>
<feature type="zinc finger region" description="C2H2-type 2">
    <location>
        <begin position="109"/>
        <end position="132"/>
    </location>
</feature>
<feature type="DNA-binding region" description="Homeobox 1" evidence="2">
    <location>
        <begin position="304"/>
        <end position="363"/>
    </location>
</feature>
<feature type="DNA-binding region" description="Homeobox 2" evidence="2">
    <location>
        <begin position="494"/>
        <end position="553"/>
    </location>
</feature>
<feature type="DNA-binding region" description="Homeobox 3" evidence="2">
    <location>
        <begin position="612"/>
        <end position="671"/>
    </location>
</feature>
<feature type="DNA-binding region" description="Homeobox 4" evidence="2">
    <location>
        <begin position="764"/>
        <end position="823"/>
    </location>
</feature>
<feature type="DNA-binding region" description="Homeobox 5" evidence="2">
    <location>
        <begin position="835"/>
        <end position="894"/>
    </location>
</feature>
<feature type="region of interest" description="Required for nuclear localization">
    <location>
        <begin position="1"/>
        <end position="107"/>
    </location>
</feature>
<feature type="region of interest" description="Disordered" evidence="3">
    <location>
        <begin position="22"/>
        <end position="66"/>
    </location>
</feature>
<feature type="region of interest" description="Required for homodimerization and interaction with NFYA" evidence="4">
    <location>
        <begin position="242"/>
        <end position="488"/>
    </location>
</feature>
<feature type="region of interest" description="Required for repressor activity">
    <location>
        <begin position="303"/>
        <end position="502"/>
    </location>
</feature>
<feature type="region of interest" description="Required for nuclear localization">
    <location>
        <begin position="497"/>
        <end position="555"/>
    </location>
</feature>
<feature type="region of interest" description="Disordered" evidence="3">
    <location>
        <begin position="598"/>
        <end position="618"/>
    </location>
</feature>
<feature type="region of interest" description="Disordered" evidence="3">
    <location>
        <begin position="666"/>
        <end position="695"/>
    </location>
</feature>
<feature type="region of interest" description="Disordered" evidence="3">
    <location>
        <begin position="890"/>
        <end position="956"/>
    </location>
</feature>
<feature type="compositionally biased region" description="Low complexity" evidence="3">
    <location>
        <begin position="42"/>
        <end position="58"/>
    </location>
</feature>
<feature type="compositionally biased region" description="Basic and acidic residues" evidence="3">
    <location>
        <begin position="666"/>
        <end position="677"/>
    </location>
</feature>
<feature type="compositionally biased region" description="Acidic residues" evidence="3">
    <location>
        <begin position="679"/>
        <end position="695"/>
    </location>
</feature>
<feature type="modified residue" description="Phosphoserine" evidence="11">
    <location>
        <position position="599"/>
    </location>
</feature>
<feature type="modified residue" description="Phosphoserine" evidence="11">
    <location>
        <position position="604"/>
    </location>
</feature>
<feature type="modified residue" description="Phosphoserine" evidence="9 11">
    <location>
        <position position="680"/>
    </location>
</feature>
<feature type="modified residue" description="Phosphoserine" evidence="1">
    <location>
        <position position="708"/>
    </location>
</feature>
<feature type="modified residue" description="Phosphoserine" evidence="11">
    <location>
        <position position="723"/>
    </location>
</feature>
<feature type="modified residue" description="Phosphoserine" evidence="12">
    <location>
        <position position="927"/>
    </location>
</feature>
<feature type="modified residue" description="Phosphoserine" evidence="10 12">
    <location>
        <position position="946"/>
    </location>
</feature>
<feature type="splice variant" id="VSP_054307" description="In isoform 2." evidence="7">
    <original>VKQWFAEKMGEETRAVADTGSEDQGPGTGELTAVHKGMGDTYSEVSENSESWEPRVPEASSEPFDTSSPQAGRQLETD</original>
    <variation>KQTEFDLINVKDWPVWETACHVEEPNPTLCCHMPFPCPAAGHLGELPESSQTAQSLPLPSACPPPSKQQARWGSHQFFLPQCRTFPLPSNG</variation>
    <location>
        <begin position="879"/>
        <end position="956"/>
    </location>
</feature>
<feature type="sequence variant" id="VAR_049597" description="In dbSNP:rs17265513.">
    <original>N</original>
    <variation>S</variation>
    <location>
        <position position="310"/>
    </location>
</feature>
<feature type="sequence conflict" description="In Ref. 7; AAH68569." evidence="8" ref="7">
    <original>L</original>
    <variation>M</variation>
    <location>
        <position position="642"/>
    </location>
</feature>
<feature type="sequence conflict" description="In Ref. 2; BAA23691." evidence="8" ref="2">
    <original>G</original>
    <variation>T</variation>
    <location>
        <position position="907"/>
    </location>
</feature>
<feature type="helix" evidence="14">
    <location>
        <begin position="503"/>
        <end position="515"/>
    </location>
</feature>
<feature type="strand" evidence="14">
    <location>
        <begin position="516"/>
        <end position="518"/>
    </location>
</feature>
<feature type="helix" evidence="14">
    <location>
        <begin position="522"/>
        <end position="531"/>
    </location>
</feature>
<feature type="helix" evidence="14">
    <location>
        <begin position="535"/>
        <end position="548"/>
    </location>
</feature>
<feature type="strand" evidence="14">
    <location>
        <begin position="549"/>
        <end position="551"/>
    </location>
</feature>
<feature type="strand" evidence="14">
    <location>
        <begin position="554"/>
        <end position="556"/>
    </location>
</feature>
<feature type="helix" evidence="13">
    <location>
        <begin position="621"/>
        <end position="633"/>
    </location>
</feature>
<feature type="helix" evidence="13">
    <location>
        <begin position="639"/>
        <end position="649"/>
    </location>
</feature>
<feature type="helix" evidence="13">
    <location>
        <begin position="653"/>
        <end position="663"/>
    </location>
</feature>
<feature type="helix" evidence="13">
    <location>
        <begin position="666"/>
        <end position="669"/>
    </location>
</feature>
<name>ZHX3_HUMAN</name>
<comment type="function">
    <text evidence="4 6">Acts as a transcriptional repressor. Involved in the early stages of mesenchymal stem cell (MSC) osteogenic differentiation. Is a regulator of podocyte gene expression during primary glomerula disease. Binds to promoter DNA.</text>
</comment>
<comment type="subunit">
    <text evidence="4 5">Homodimer (via homeobox domain 1) (PubMed:12659632, PubMed:14659886). Heterodimer with ZHX1 (via homeobox domain 1) (PubMed:12659632). Heterodimer with ZHX2 (via homeobox domain 1) (PubMed:14659886). Heterodimerization with ZHX1 is a prerequisite for repressor activity (PubMed:12659632). Interacts with NFYA (PubMed:12659632).</text>
</comment>
<comment type="interaction">
    <interactant intactId="EBI-948582">
        <id>Q9H4I2</id>
    </interactant>
    <interactant intactId="EBI-366978">
        <id>Q9UBE8</id>
        <label>NLK</label>
    </interactant>
    <organismsDiffer>false</organismsDiffer>
    <experiments>4</experiments>
</comment>
<comment type="interaction">
    <interactant intactId="EBI-10693326">
        <id>Q9H4I2-2</id>
    </interactant>
    <interactant intactId="EBI-930964">
        <id>P54253</id>
        <label>ATXN1</label>
    </interactant>
    <organismsDiffer>false</organismsDiffer>
    <experiments>6</experiments>
</comment>
<comment type="interaction">
    <interactant intactId="EBI-10693326">
        <id>Q9H4I2-2</id>
    </interactant>
    <interactant intactId="EBI-946046">
        <id>P54252</id>
        <label>ATXN3</label>
    </interactant>
    <organismsDiffer>false</organismsDiffer>
    <experiments>3</experiments>
</comment>
<comment type="interaction">
    <interactant intactId="EBI-10693326">
        <id>Q9H4I2-2</id>
    </interactant>
    <interactant intactId="EBI-10988864">
        <id>P46379-2</id>
        <label>BAG6</label>
    </interactant>
    <organismsDiffer>false</organismsDiffer>
    <experiments>3</experiments>
</comment>
<comment type="interaction">
    <interactant intactId="EBI-10693326">
        <id>Q9H4I2-2</id>
    </interactant>
    <interactant intactId="EBI-21553822">
        <id>Q96A83-2</id>
        <label>COL26A1</label>
    </interactant>
    <organismsDiffer>false</organismsDiffer>
    <experiments>3</experiments>
</comment>
<comment type="interaction">
    <interactant intactId="EBI-10693326">
        <id>Q9H4I2-2</id>
    </interactant>
    <interactant intactId="EBI-744302">
        <id>P14136</id>
        <label>GFAP</label>
    </interactant>
    <organismsDiffer>false</organismsDiffer>
    <experiments>3</experiments>
</comment>
<comment type="interaction">
    <interactant intactId="EBI-10693326">
        <id>Q9H4I2-2</id>
    </interactant>
    <interactant intactId="EBI-948266">
        <id>O14901</id>
        <label>KLF11</label>
    </interactant>
    <organismsDiffer>false</organismsDiffer>
    <experiments>3</experiments>
</comment>
<comment type="interaction">
    <interactant intactId="EBI-10693326">
        <id>Q9H4I2-2</id>
    </interactant>
    <interactant intactId="EBI-366978">
        <id>Q9UBE8</id>
        <label>NLK</label>
    </interactant>
    <organismsDiffer>false</organismsDiffer>
    <experiments>3</experiments>
</comment>
<comment type="subcellular location">
    <subcellularLocation>
        <location evidence="2 4">Nucleus</location>
    </subcellularLocation>
</comment>
<comment type="alternative products">
    <event type="alternative splicing"/>
    <isoform>
        <id>Q9H4I2-1</id>
        <name>1</name>
        <sequence type="displayed"/>
    </isoform>
    <isoform>
        <id>Q9H4I2-2</id>
        <name>2</name>
        <sequence type="described" ref="VSP_054307"/>
    </isoform>
</comment>
<comment type="tissue specificity">
    <text evidence="4 6">Widely expressed. High expression in kidney. Expressed during osteogenic differentiation.</text>
</comment>
<comment type="induction">
    <text evidence="6">Up-regulated during osteogenic differentiation of mesenchymal stem cells.</text>
</comment>
<comment type="similarity">
    <text evidence="8">Belongs to the ZHX family.</text>
</comment>
<comment type="sequence caution" evidence="8">
    <conflict type="erroneous initiation">
        <sequence resource="EMBL-CDS" id="BAA23691"/>
    </conflict>
</comment>
<keyword id="KW-0002">3D-structure</keyword>
<keyword id="KW-0025">Alternative splicing</keyword>
<keyword id="KW-0221">Differentiation</keyword>
<keyword id="KW-0238">DNA-binding</keyword>
<keyword id="KW-0371">Homeobox</keyword>
<keyword id="KW-0479">Metal-binding</keyword>
<keyword id="KW-0539">Nucleus</keyword>
<keyword id="KW-0597">Phosphoprotein</keyword>
<keyword id="KW-1267">Proteomics identification</keyword>
<keyword id="KW-1185">Reference proteome</keyword>
<keyword id="KW-0677">Repeat</keyword>
<keyword id="KW-0678">Repressor</keyword>
<keyword id="KW-0804">Transcription</keyword>
<keyword id="KW-0805">Transcription regulation</keyword>
<keyword id="KW-0862">Zinc</keyword>
<keyword id="KW-0863">Zinc-finger</keyword>
<evidence type="ECO:0000250" key="1">
    <source>
        <dbReference type="UniProtKB" id="Q8C0Q2"/>
    </source>
</evidence>
<evidence type="ECO:0000255" key="2">
    <source>
        <dbReference type="PROSITE-ProRule" id="PRU00108"/>
    </source>
</evidence>
<evidence type="ECO:0000256" key="3">
    <source>
        <dbReference type="SAM" id="MobiDB-lite"/>
    </source>
</evidence>
<evidence type="ECO:0000269" key="4">
    <source>
    </source>
</evidence>
<evidence type="ECO:0000269" key="5">
    <source>
    </source>
</evidence>
<evidence type="ECO:0000269" key="6">
    <source>
    </source>
</evidence>
<evidence type="ECO:0000303" key="7">
    <source>
    </source>
</evidence>
<evidence type="ECO:0000305" key="8"/>
<evidence type="ECO:0007744" key="9">
    <source>
    </source>
</evidence>
<evidence type="ECO:0007744" key="10">
    <source>
    </source>
</evidence>
<evidence type="ECO:0007744" key="11">
    <source>
    </source>
</evidence>
<evidence type="ECO:0007744" key="12">
    <source>
    </source>
</evidence>
<evidence type="ECO:0007829" key="13">
    <source>
        <dbReference type="PDB" id="2DA5"/>
    </source>
</evidence>
<evidence type="ECO:0007829" key="14">
    <source>
        <dbReference type="PDB" id="2DN0"/>
    </source>
</evidence>
<organism>
    <name type="scientific">Homo sapiens</name>
    <name type="common">Human</name>
    <dbReference type="NCBI Taxonomy" id="9606"/>
    <lineage>
        <taxon>Eukaryota</taxon>
        <taxon>Metazoa</taxon>
        <taxon>Chordata</taxon>
        <taxon>Craniata</taxon>
        <taxon>Vertebrata</taxon>
        <taxon>Euteleostomi</taxon>
        <taxon>Mammalia</taxon>
        <taxon>Eutheria</taxon>
        <taxon>Euarchontoglires</taxon>
        <taxon>Primates</taxon>
        <taxon>Haplorrhini</taxon>
        <taxon>Catarrhini</taxon>
        <taxon>Hominidae</taxon>
        <taxon>Homo</taxon>
    </lineage>
</organism>
<dbReference type="EMBL" id="AB081948">
    <property type="protein sequence ID" value="BAC65211.1"/>
    <property type="molecule type" value="mRNA"/>
</dbReference>
<dbReference type="EMBL" id="AB007855">
    <property type="protein sequence ID" value="BAA23691.3"/>
    <property type="status" value="ALT_INIT"/>
    <property type="molecule type" value="mRNA"/>
</dbReference>
<dbReference type="EMBL" id="AL022394">
    <property type="status" value="NOT_ANNOTATED_CDS"/>
    <property type="molecule type" value="Genomic_DNA"/>
</dbReference>
<dbReference type="EMBL" id="AL031257">
    <property type="status" value="NOT_ANNOTATED_CDS"/>
    <property type="molecule type" value="Genomic_DNA"/>
</dbReference>
<dbReference type="EMBL" id="CH471077">
    <property type="protein sequence ID" value="EAW75987.1"/>
    <property type="molecule type" value="Genomic_DNA"/>
</dbReference>
<dbReference type="EMBL" id="CH471077">
    <property type="protein sequence ID" value="EAW75988.1"/>
    <property type="molecule type" value="Genomic_DNA"/>
</dbReference>
<dbReference type="EMBL" id="BC068569">
    <property type="protein sequence ID" value="AAH68569.1"/>
    <property type="molecule type" value="mRNA"/>
</dbReference>
<dbReference type="CCDS" id="CCDS13315.1">
    <molecule id="Q9H4I2-1"/>
</dbReference>
<dbReference type="CCDS" id="CCDS93040.1">
    <molecule id="Q9H4I2-2"/>
</dbReference>
<dbReference type="RefSeq" id="NP_001371244.1">
    <molecule id="Q9H4I2-1"/>
    <property type="nucleotide sequence ID" value="NM_001384315.1"/>
</dbReference>
<dbReference type="RefSeq" id="NP_001371245.1">
    <molecule id="Q9H4I2-1"/>
    <property type="nucleotide sequence ID" value="NM_001384316.1"/>
</dbReference>
<dbReference type="RefSeq" id="NP_001371246.1">
    <molecule id="Q9H4I2-1"/>
    <property type="nucleotide sequence ID" value="NM_001384317.1"/>
</dbReference>
<dbReference type="RefSeq" id="NP_001371247.1">
    <molecule id="Q9H4I2-1"/>
    <property type="nucleotide sequence ID" value="NM_001384318.1"/>
</dbReference>
<dbReference type="RefSeq" id="NP_001371248.1">
    <molecule id="Q9H4I2-1"/>
    <property type="nucleotide sequence ID" value="NM_001384319.1"/>
</dbReference>
<dbReference type="RefSeq" id="NP_001371249.1">
    <molecule id="Q9H4I2-1"/>
    <property type="nucleotide sequence ID" value="NM_001384320.1"/>
</dbReference>
<dbReference type="RefSeq" id="NP_001371250.1">
    <molecule id="Q9H4I2-1"/>
    <property type="nucleotide sequence ID" value="NM_001384321.1"/>
</dbReference>
<dbReference type="RefSeq" id="NP_001371251.1">
    <molecule id="Q9H4I2-1"/>
    <property type="nucleotide sequence ID" value="NM_001384322.1"/>
</dbReference>
<dbReference type="RefSeq" id="NP_001371252.1">
    <molecule id="Q9H4I2-1"/>
    <property type="nucleotide sequence ID" value="NM_001384323.1"/>
</dbReference>
<dbReference type="RefSeq" id="NP_001371253.1">
    <molecule id="Q9H4I2-2"/>
    <property type="nucleotide sequence ID" value="NM_001384324.1"/>
</dbReference>
<dbReference type="RefSeq" id="NP_055850.1">
    <molecule id="Q9H4I2-1"/>
    <property type="nucleotide sequence ID" value="NM_015035.4"/>
</dbReference>
<dbReference type="RefSeq" id="XP_005260398.1">
    <molecule id="Q9H4I2-2"/>
    <property type="nucleotide sequence ID" value="XM_005260341.5"/>
</dbReference>
<dbReference type="RefSeq" id="XP_011527022.1">
    <property type="nucleotide sequence ID" value="XM_011528720.1"/>
</dbReference>
<dbReference type="RefSeq" id="XP_016883226.1">
    <property type="nucleotide sequence ID" value="XM_017027737.1"/>
</dbReference>
<dbReference type="RefSeq" id="XP_016883227.1">
    <property type="nucleotide sequence ID" value="XM_017027738.1"/>
</dbReference>
<dbReference type="RefSeq" id="XP_047296000.1">
    <molecule id="Q9H4I2-2"/>
    <property type="nucleotide sequence ID" value="XM_047440044.1"/>
</dbReference>
<dbReference type="RefSeq" id="XP_047296001.1">
    <molecule id="Q9H4I2-1"/>
    <property type="nucleotide sequence ID" value="XM_047440045.1"/>
</dbReference>
<dbReference type="RefSeq" id="XP_047296002.1">
    <molecule id="Q9H4I2-1"/>
    <property type="nucleotide sequence ID" value="XM_047440046.1"/>
</dbReference>
<dbReference type="PDB" id="2DA5">
    <property type="method" value="NMR"/>
    <property type="chains" value="A=613-674"/>
</dbReference>
<dbReference type="PDB" id="2DN0">
    <property type="method" value="NMR"/>
    <property type="chains" value="A=494-556"/>
</dbReference>
<dbReference type="PDBsum" id="2DA5"/>
<dbReference type="PDBsum" id="2DN0"/>
<dbReference type="SMR" id="Q9H4I2"/>
<dbReference type="BioGRID" id="116688">
    <property type="interactions" value="43"/>
</dbReference>
<dbReference type="FunCoup" id="Q9H4I2">
    <property type="interactions" value="1255"/>
</dbReference>
<dbReference type="IntAct" id="Q9H4I2">
    <property type="interactions" value="28"/>
</dbReference>
<dbReference type="MINT" id="Q9H4I2"/>
<dbReference type="STRING" id="9606.ENSP00000312222"/>
<dbReference type="GlyCosmos" id="Q9H4I2">
    <property type="glycosylation" value="4 sites, 1 glycan"/>
</dbReference>
<dbReference type="GlyGen" id="Q9H4I2">
    <property type="glycosylation" value="14 sites, 1 O-linked glycan (14 sites)"/>
</dbReference>
<dbReference type="iPTMnet" id="Q9H4I2"/>
<dbReference type="PhosphoSitePlus" id="Q9H4I2"/>
<dbReference type="BioMuta" id="ZHX3"/>
<dbReference type="DMDM" id="44889075"/>
<dbReference type="jPOST" id="Q9H4I2"/>
<dbReference type="MassIVE" id="Q9H4I2"/>
<dbReference type="PaxDb" id="9606-ENSP00000312222"/>
<dbReference type="PeptideAtlas" id="Q9H4I2"/>
<dbReference type="ProteomicsDB" id="27656"/>
<dbReference type="ProteomicsDB" id="80842">
    <molecule id="Q9H4I2-1"/>
</dbReference>
<dbReference type="Pumba" id="Q9H4I2"/>
<dbReference type="Antibodypedia" id="1834">
    <property type="antibodies" value="159 antibodies from 22 providers"/>
</dbReference>
<dbReference type="DNASU" id="23051"/>
<dbReference type="Ensembl" id="ENST00000309060.7">
    <molecule id="Q9H4I2-1"/>
    <property type="protein sequence ID" value="ENSP00000312222.4"/>
    <property type="gene ID" value="ENSG00000174306.22"/>
</dbReference>
<dbReference type="Ensembl" id="ENST00000432768.6">
    <molecule id="Q9H4I2-1"/>
    <property type="protein sequence ID" value="ENSP00000415498.3"/>
    <property type="gene ID" value="ENSG00000174306.22"/>
</dbReference>
<dbReference type="Ensembl" id="ENST00000544979.6">
    <molecule id="Q9H4I2-2"/>
    <property type="protein sequence ID" value="ENSP00000443783.2"/>
    <property type="gene ID" value="ENSG00000174306.22"/>
</dbReference>
<dbReference type="Ensembl" id="ENST00000559234.5">
    <molecule id="Q9H4I2-1"/>
    <property type="protein sequence ID" value="ENSP00000452965.1"/>
    <property type="gene ID" value="ENSG00000174306.22"/>
</dbReference>
<dbReference type="Ensembl" id="ENST00000560361.5">
    <molecule id="Q9H4I2-1"/>
    <property type="protein sequence ID" value="ENSP00000454006.1"/>
    <property type="gene ID" value="ENSG00000174306.22"/>
</dbReference>
<dbReference type="Ensembl" id="ENST00000683867.1">
    <molecule id="Q9H4I2-1"/>
    <property type="protein sequence ID" value="ENSP00000506788.1"/>
    <property type="gene ID" value="ENSG00000174306.22"/>
</dbReference>
<dbReference type="GeneID" id="23051"/>
<dbReference type="KEGG" id="hsa:23051"/>
<dbReference type="MANE-Select" id="ENST00000683867.1">
    <property type="protein sequence ID" value="ENSP00000506788.1"/>
    <property type="RefSeq nucleotide sequence ID" value="NM_001384317.1"/>
    <property type="RefSeq protein sequence ID" value="NP_001371246.1"/>
</dbReference>
<dbReference type="UCSC" id="uc002xjr.2">
    <molecule id="Q9H4I2-1"/>
    <property type="organism name" value="human"/>
</dbReference>
<dbReference type="AGR" id="HGNC:15935"/>
<dbReference type="CTD" id="23051"/>
<dbReference type="DisGeNET" id="23051"/>
<dbReference type="GeneCards" id="ZHX3"/>
<dbReference type="HGNC" id="HGNC:15935">
    <property type="gene designation" value="ZHX3"/>
</dbReference>
<dbReference type="HPA" id="ENSG00000174306">
    <property type="expression patterns" value="Low tissue specificity"/>
</dbReference>
<dbReference type="MIM" id="609598">
    <property type="type" value="gene"/>
</dbReference>
<dbReference type="neXtProt" id="NX_Q9H4I2"/>
<dbReference type="OpenTargets" id="ENSG00000174306"/>
<dbReference type="PharmGKB" id="PA38056"/>
<dbReference type="VEuPathDB" id="HostDB:ENSG00000174306"/>
<dbReference type="eggNOG" id="ENOG502RC6G">
    <property type="taxonomic scope" value="Eukaryota"/>
</dbReference>
<dbReference type="GeneTree" id="ENSGT00950000182893"/>
<dbReference type="HOGENOM" id="CLU_009147_1_0_1"/>
<dbReference type="InParanoid" id="Q9H4I2"/>
<dbReference type="OMA" id="ACEPEDD"/>
<dbReference type="OrthoDB" id="9934076at2759"/>
<dbReference type="PAN-GO" id="Q9H4I2">
    <property type="GO annotations" value="3 GO annotations based on evolutionary models"/>
</dbReference>
<dbReference type="PhylomeDB" id="Q9H4I2"/>
<dbReference type="TreeFam" id="TF333363"/>
<dbReference type="PathwayCommons" id="Q9H4I2"/>
<dbReference type="SignaLink" id="Q9H4I2"/>
<dbReference type="BioGRID-ORCS" id="23051">
    <property type="hits" value="9 hits in 1176 CRISPR screens"/>
</dbReference>
<dbReference type="ChiTaRS" id="ZHX3">
    <property type="organism name" value="human"/>
</dbReference>
<dbReference type="EvolutionaryTrace" id="Q9H4I2"/>
<dbReference type="GeneWiki" id="ZHX3"/>
<dbReference type="GenomeRNAi" id="23051"/>
<dbReference type="Pharos" id="Q9H4I2">
    <property type="development level" value="Tbio"/>
</dbReference>
<dbReference type="PRO" id="PR:Q9H4I2"/>
<dbReference type="Proteomes" id="UP000005640">
    <property type="component" value="Chromosome 20"/>
</dbReference>
<dbReference type="RNAct" id="Q9H4I2">
    <property type="molecule type" value="protein"/>
</dbReference>
<dbReference type="Bgee" id="ENSG00000174306">
    <property type="expression patterns" value="Expressed in sural nerve and 204 other cell types or tissues"/>
</dbReference>
<dbReference type="ExpressionAtlas" id="Q9H4I2">
    <property type="expression patterns" value="baseline and differential"/>
</dbReference>
<dbReference type="GO" id="GO:0000785">
    <property type="term" value="C:chromatin"/>
    <property type="evidence" value="ECO:0000247"/>
    <property type="project" value="NTNU_SB"/>
</dbReference>
<dbReference type="GO" id="GO:0005654">
    <property type="term" value="C:nucleoplasm"/>
    <property type="evidence" value="ECO:0000314"/>
    <property type="project" value="HPA"/>
</dbReference>
<dbReference type="GO" id="GO:0005634">
    <property type="term" value="C:nucleus"/>
    <property type="evidence" value="ECO:0000314"/>
    <property type="project" value="UniProtKB"/>
</dbReference>
<dbReference type="GO" id="GO:0003700">
    <property type="term" value="F:DNA-binding transcription factor activity"/>
    <property type="evidence" value="ECO:0000314"/>
    <property type="project" value="UniProtKB"/>
</dbReference>
<dbReference type="GO" id="GO:0000981">
    <property type="term" value="F:DNA-binding transcription factor activity, RNA polymerase II-specific"/>
    <property type="evidence" value="ECO:0000247"/>
    <property type="project" value="NTNU_SB"/>
</dbReference>
<dbReference type="GO" id="GO:0046982">
    <property type="term" value="F:protein heterodimerization activity"/>
    <property type="evidence" value="ECO:0000314"/>
    <property type="project" value="UniProtKB"/>
</dbReference>
<dbReference type="GO" id="GO:0042803">
    <property type="term" value="F:protein homodimerization activity"/>
    <property type="evidence" value="ECO:0000314"/>
    <property type="project" value="UniProtKB"/>
</dbReference>
<dbReference type="GO" id="GO:0000977">
    <property type="term" value="F:RNA polymerase II transcription regulatory region sequence-specific DNA binding"/>
    <property type="evidence" value="ECO:0007669"/>
    <property type="project" value="Ensembl"/>
</dbReference>
<dbReference type="GO" id="GO:0008270">
    <property type="term" value="F:zinc ion binding"/>
    <property type="evidence" value="ECO:0007669"/>
    <property type="project" value="UniProtKB-KW"/>
</dbReference>
<dbReference type="GO" id="GO:0030154">
    <property type="term" value="P:cell differentiation"/>
    <property type="evidence" value="ECO:0007669"/>
    <property type="project" value="UniProtKB-KW"/>
</dbReference>
<dbReference type="GO" id="GO:0045892">
    <property type="term" value="P:negative regulation of DNA-templated transcription"/>
    <property type="evidence" value="ECO:0000314"/>
    <property type="project" value="UniProtKB"/>
</dbReference>
<dbReference type="GO" id="GO:0000122">
    <property type="term" value="P:negative regulation of transcription by RNA polymerase II"/>
    <property type="evidence" value="ECO:0007669"/>
    <property type="project" value="Ensembl"/>
</dbReference>
<dbReference type="GO" id="GO:0045669">
    <property type="term" value="P:positive regulation of osteoblast differentiation"/>
    <property type="evidence" value="ECO:0000315"/>
    <property type="project" value="UniProtKB"/>
</dbReference>
<dbReference type="GO" id="GO:0006357">
    <property type="term" value="P:regulation of transcription by RNA polymerase II"/>
    <property type="evidence" value="ECO:0000318"/>
    <property type="project" value="GO_Central"/>
</dbReference>
<dbReference type="CDD" id="cd00086">
    <property type="entry name" value="homeodomain"/>
    <property type="match status" value="4"/>
</dbReference>
<dbReference type="FunFam" id="1.10.10.60:FF:000194">
    <property type="entry name" value="Zinc fingers and homeoboxes protein 3"/>
    <property type="match status" value="1"/>
</dbReference>
<dbReference type="FunFam" id="1.10.10.60:FF:000208">
    <property type="entry name" value="Zinc fingers and homeoboxes protein 3"/>
    <property type="match status" value="1"/>
</dbReference>
<dbReference type="FunFam" id="1.10.10.60:FF:000212">
    <property type="entry name" value="Zinc fingers and homeoboxes protein 3"/>
    <property type="match status" value="1"/>
</dbReference>
<dbReference type="FunFam" id="3.30.160.60:FF:000864">
    <property type="entry name" value="Zinc fingers and homeoboxes protein 3"/>
    <property type="match status" value="1"/>
</dbReference>
<dbReference type="FunFam" id="1.10.10.60:FF:000062">
    <property type="entry name" value="zinc fingers and homeoboxes protein 3"/>
    <property type="match status" value="1"/>
</dbReference>
<dbReference type="FunFam" id="1.10.10.60:FF:000133">
    <property type="entry name" value="zinc fingers and homeoboxes protein 3"/>
    <property type="match status" value="1"/>
</dbReference>
<dbReference type="Gene3D" id="3.30.160.60">
    <property type="entry name" value="Classic Zinc Finger"/>
    <property type="match status" value="1"/>
</dbReference>
<dbReference type="Gene3D" id="1.10.10.60">
    <property type="entry name" value="Homeodomain-like"/>
    <property type="match status" value="5"/>
</dbReference>
<dbReference type="InterPro" id="IPR001356">
    <property type="entry name" value="HD"/>
</dbReference>
<dbReference type="InterPro" id="IPR009057">
    <property type="entry name" value="Homeodomain-like_sf"/>
</dbReference>
<dbReference type="InterPro" id="IPR024578">
    <property type="entry name" value="Homez_homeobox_dom"/>
</dbReference>
<dbReference type="InterPro" id="IPR041057">
    <property type="entry name" value="ZHX_Znf_C2H2"/>
</dbReference>
<dbReference type="InterPro" id="IPR036236">
    <property type="entry name" value="Znf_C2H2_sf"/>
</dbReference>
<dbReference type="InterPro" id="IPR013087">
    <property type="entry name" value="Znf_C2H2_type"/>
</dbReference>
<dbReference type="PANTHER" id="PTHR15467:SF6">
    <property type="entry name" value="ZINC FINGERS AND HOMEOBOXES PROTEIN 3"/>
    <property type="match status" value="1"/>
</dbReference>
<dbReference type="PANTHER" id="PTHR15467">
    <property type="entry name" value="ZINC-FINGERS AND HOMEOBOXES RELATED"/>
    <property type="match status" value="1"/>
</dbReference>
<dbReference type="Pfam" id="PF00046">
    <property type="entry name" value="Homeodomain"/>
    <property type="match status" value="3"/>
</dbReference>
<dbReference type="Pfam" id="PF11569">
    <property type="entry name" value="Homez"/>
    <property type="match status" value="1"/>
</dbReference>
<dbReference type="Pfam" id="PF18387">
    <property type="entry name" value="zf_C2H2_ZHX"/>
    <property type="match status" value="1"/>
</dbReference>
<dbReference type="SMART" id="SM00389">
    <property type="entry name" value="HOX"/>
    <property type="match status" value="4"/>
</dbReference>
<dbReference type="SMART" id="SM00355">
    <property type="entry name" value="ZnF_C2H2"/>
    <property type="match status" value="2"/>
</dbReference>
<dbReference type="SUPFAM" id="SSF57667">
    <property type="entry name" value="beta-beta-alpha zinc fingers"/>
    <property type="match status" value="1"/>
</dbReference>
<dbReference type="SUPFAM" id="SSF46689">
    <property type="entry name" value="Homeodomain-like"/>
    <property type="match status" value="5"/>
</dbReference>
<dbReference type="PROSITE" id="PS50071">
    <property type="entry name" value="HOMEOBOX_2"/>
    <property type="match status" value="4"/>
</dbReference>
<proteinExistence type="evidence at protein level"/>
<gene>
    <name type="primary">ZHX3</name>
    <name type="synonym">KIAA0395</name>
    <name type="synonym">TIX1</name>
</gene>
<reference key="1">
    <citation type="journal article" date="2003" name="Biochem. J.">
        <title>Analysis of zinc-fingers and homeoboxes (ZHX)-1-interacting proteins: molecular cloning and characterization of a member of the ZHX family, ZHX3.</title>
        <authorList>
            <person name="Yamada K."/>
            <person name="Kawata H."/>
            <person name="Shou Z."/>
            <person name="Hirano S."/>
            <person name="Mizutani T."/>
            <person name="Yazawa T."/>
            <person name="Sekiguchi T."/>
            <person name="Yoshino M."/>
            <person name="Kajitani T."/>
            <person name="Miyamoto K."/>
        </authorList>
    </citation>
    <scope>NUCLEOTIDE SEQUENCE [MRNA] (ISOFORM 1)</scope>
    <scope>FUNCTION</scope>
    <scope>SUBUNIT</scope>
    <scope>SUBCELLULAR LOCATION</scope>
    <scope>TISSUE SPECIFICITY</scope>
    <scope>INTERACTION WITH NFYA</scope>
    <source>
        <tissue>Testis</tissue>
    </source>
</reference>
<reference key="2">
    <citation type="journal article" date="1997" name="DNA Res.">
        <title>Prediction of the coding sequences of unidentified human genes. VIII. 78 new cDNA clones from brain which code for large proteins in vitro.</title>
        <authorList>
            <person name="Ishikawa K."/>
            <person name="Nagase T."/>
            <person name="Nakajima D."/>
            <person name="Seki N."/>
            <person name="Ohira M."/>
            <person name="Miyajima N."/>
            <person name="Tanaka A."/>
            <person name="Kotani H."/>
            <person name="Nomura N."/>
            <person name="Ohara O."/>
        </authorList>
    </citation>
    <scope>NUCLEOTIDE SEQUENCE [LARGE SCALE MRNA] (ISOFORM 1)</scope>
    <source>
        <tissue>Brain</tissue>
    </source>
</reference>
<reference key="3">
    <citation type="journal article" date="2002" name="DNA Res.">
        <title>Construction of expression-ready cDNA clones for KIAA genes: manual curation of 330 KIAA cDNA clones.</title>
        <authorList>
            <person name="Nakajima D."/>
            <person name="Okazaki N."/>
            <person name="Yamakawa H."/>
            <person name="Kikuno R."/>
            <person name="Ohara O."/>
            <person name="Nagase T."/>
        </authorList>
    </citation>
    <scope>SEQUENCE REVISION</scope>
</reference>
<reference key="4">
    <citation type="submission" date="2005-08" db="EMBL/GenBank/DDBJ databases">
        <authorList>
            <person name="Ohara O."/>
            <person name="Nagase T."/>
            <person name="Kikuno R."/>
        </authorList>
    </citation>
    <scope>SEQUENCE REVISION</scope>
</reference>
<reference key="5">
    <citation type="journal article" date="2001" name="Nature">
        <title>The DNA sequence and comparative analysis of human chromosome 20.</title>
        <authorList>
            <person name="Deloukas P."/>
            <person name="Matthews L.H."/>
            <person name="Ashurst J.L."/>
            <person name="Burton J."/>
            <person name="Gilbert J.G.R."/>
            <person name="Jones M."/>
            <person name="Stavrides G."/>
            <person name="Almeida J.P."/>
            <person name="Babbage A.K."/>
            <person name="Bagguley C.L."/>
            <person name="Bailey J."/>
            <person name="Barlow K.F."/>
            <person name="Bates K.N."/>
            <person name="Beard L.M."/>
            <person name="Beare D.M."/>
            <person name="Beasley O.P."/>
            <person name="Bird C.P."/>
            <person name="Blakey S.E."/>
            <person name="Bridgeman A.M."/>
            <person name="Brown A.J."/>
            <person name="Buck D."/>
            <person name="Burrill W.D."/>
            <person name="Butler A.P."/>
            <person name="Carder C."/>
            <person name="Carter N.P."/>
            <person name="Chapman J.C."/>
            <person name="Clamp M."/>
            <person name="Clark G."/>
            <person name="Clark L.N."/>
            <person name="Clark S.Y."/>
            <person name="Clee C.M."/>
            <person name="Clegg S."/>
            <person name="Cobley V.E."/>
            <person name="Collier R.E."/>
            <person name="Connor R.E."/>
            <person name="Corby N.R."/>
            <person name="Coulson A."/>
            <person name="Coville G.J."/>
            <person name="Deadman R."/>
            <person name="Dhami P.D."/>
            <person name="Dunn M."/>
            <person name="Ellington A.G."/>
            <person name="Frankland J.A."/>
            <person name="Fraser A."/>
            <person name="French L."/>
            <person name="Garner P."/>
            <person name="Grafham D.V."/>
            <person name="Griffiths C."/>
            <person name="Griffiths M.N.D."/>
            <person name="Gwilliam R."/>
            <person name="Hall R.E."/>
            <person name="Hammond S."/>
            <person name="Harley J.L."/>
            <person name="Heath P.D."/>
            <person name="Ho S."/>
            <person name="Holden J.L."/>
            <person name="Howden P.J."/>
            <person name="Huckle E."/>
            <person name="Hunt A.R."/>
            <person name="Hunt S.E."/>
            <person name="Jekosch K."/>
            <person name="Johnson C.M."/>
            <person name="Johnson D."/>
            <person name="Kay M.P."/>
            <person name="Kimberley A.M."/>
            <person name="King A."/>
            <person name="Knights A."/>
            <person name="Laird G.K."/>
            <person name="Lawlor S."/>
            <person name="Lehvaeslaiho M.H."/>
            <person name="Leversha M.A."/>
            <person name="Lloyd C."/>
            <person name="Lloyd D.M."/>
            <person name="Lovell J.D."/>
            <person name="Marsh V.L."/>
            <person name="Martin S.L."/>
            <person name="McConnachie L.J."/>
            <person name="McLay K."/>
            <person name="McMurray A.A."/>
            <person name="Milne S.A."/>
            <person name="Mistry D."/>
            <person name="Moore M.J.F."/>
            <person name="Mullikin J.C."/>
            <person name="Nickerson T."/>
            <person name="Oliver K."/>
            <person name="Parker A."/>
            <person name="Patel R."/>
            <person name="Pearce T.A.V."/>
            <person name="Peck A.I."/>
            <person name="Phillimore B.J.C.T."/>
            <person name="Prathalingam S.R."/>
            <person name="Plumb R.W."/>
            <person name="Ramsay H."/>
            <person name="Rice C.M."/>
            <person name="Ross M.T."/>
            <person name="Scott C.E."/>
            <person name="Sehra H.K."/>
            <person name="Shownkeen R."/>
            <person name="Sims S."/>
            <person name="Skuce C.D."/>
            <person name="Smith M.L."/>
            <person name="Soderlund C."/>
            <person name="Steward C.A."/>
            <person name="Sulston J.E."/>
            <person name="Swann R.M."/>
            <person name="Sycamore N."/>
            <person name="Taylor R."/>
            <person name="Tee L."/>
            <person name="Thomas D.W."/>
            <person name="Thorpe A."/>
            <person name="Tracey A."/>
            <person name="Tromans A.C."/>
            <person name="Vaudin M."/>
            <person name="Wall M."/>
            <person name="Wallis J.M."/>
            <person name="Whitehead S.L."/>
            <person name="Whittaker P."/>
            <person name="Willey D.L."/>
            <person name="Williams L."/>
            <person name="Williams S.A."/>
            <person name="Wilming L."/>
            <person name="Wray P.W."/>
            <person name="Hubbard T."/>
            <person name="Durbin R.M."/>
            <person name="Bentley D.R."/>
            <person name="Beck S."/>
            <person name="Rogers J."/>
        </authorList>
    </citation>
    <scope>NUCLEOTIDE SEQUENCE [LARGE SCALE GENOMIC DNA]</scope>
</reference>
<reference key="6">
    <citation type="submission" date="2005-09" db="EMBL/GenBank/DDBJ databases">
        <authorList>
            <person name="Mural R.J."/>
            <person name="Istrail S."/>
            <person name="Sutton G.G."/>
            <person name="Florea L."/>
            <person name="Halpern A.L."/>
            <person name="Mobarry C.M."/>
            <person name="Lippert R."/>
            <person name="Walenz B."/>
            <person name="Shatkay H."/>
            <person name="Dew I."/>
            <person name="Miller J.R."/>
            <person name="Flanigan M.J."/>
            <person name="Edwards N.J."/>
            <person name="Bolanos R."/>
            <person name="Fasulo D."/>
            <person name="Halldorsson B.V."/>
            <person name="Hannenhalli S."/>
            <person name="Turner R."/>
            <person name="Yooseph S."/>
            <person name="Lu F."/>
            <person name="Nusskern D.R."/>
            <person name="Shue B.C."/>
            <person name="Zheng X.H."/>
            <person name="Zhong F."/>
            <person name="Delcher A.L."/>
            <person name="Huson D.H."/>
            <person name="Kravitz S.A."/>
            <person name="Mouchard L."/>
            <person name="Reinert K."/>
            <person name="Remington K.A."/>
            <person name="Clark A.G."/>
            <person name="Waterman M.S."/>
            <person name="Eichler E.E."/>
            <person name="Adams M.D."/>
            <person name="Hunkapiller M.W."/>
            <person name="Myers E.W."/>
            <person name="Venter J.C."/>
        </authorList>
    </citation>
    <scope>NUCLEOTIDE SEQUENCE [LARGE SCALE GENOMIC DNA]</scope>
</reference>
<reference key="7">
    <citation type="journal article" date="2004" name="Genome Res.">
        <title>The status, quality, and expansion of the NIH full-length cDNA project: the Mammalian Gene Collection (MGC).</title>
        <authorList>
            <consortium name="The MGC Project Team"/>
        </authorList>
    </citation>
    <scope>NUCLEOTIDE SEQUENCE [LARGE SCALE MRNA] (ISOFORM 2)</scope>
    <source>
        <tissue>Testis</tissue>
    </source>
</reference>
<reference key="8">
    <citation type="journal article" date="2003" name="Gene">
        <title>The mouse zinc-fingers and homeoboxes (ZHX) family: ZHX2 forms a heterodimer with ZHX3.</title>
        <authorList>
            <person name="Kawata H."/>
            <person name="Yamada K."/>
            <person name="Shou Z."/>
            <person name="Mizutani T."/>
            <person name="Miyamoto K."/>
        </authorList>
    </citation>
    <scope>SUBUNIT</scope>
</reference>
<reference key="9">
    <citation type="journal article" date="2008" name="Proc. Natl. Acad. Sci. U.S.A.">
        <title>A quantitative atlas of mitotic phosphorylation.</title>
        <authorList>
            <person name="Dephoure N."/>
            <person name="Zhou C."/>
            <person name="Villen J."/>
            <person name="Beausoleil S.A."/>
            <person name="Bakalarski C.E."/>
            <person name="Elledge S.J."/>
            <person name="Gygi S.P."/>
        </authorList>
    </citation>
    <scope>PHOSPHORYLATION [LARGE SCALE ANALYSIS] AT SER-680</scope>
    <scope>IDENTIFICATION BY MASS SPECTROMETRY [LARGE SCALE ANALYSIS]</scope>
    <source>
        <tissue>Cervix carcinoma</tissue>
    </source>
</reference>
<reference key="10">
    <citation type="journal article" date="2009" name="Anal. Chem.">
        <title>Lys-N and trypsin cover complementary parts of the phosphoproteome in a refined SCX-based approach.</title>
        <authorList>
            <person name="Gauci S."/>
            <person name="Helbig A.O."/>
            <person name="Slijper M."/>
            <person name="Krijgsveld J."/>
            <person name="Heck A.J."/>
            <person name="Mohammed S."/>
        </authorList>
    </citation>
    <scope>IDENTIFICATION BY MASS SPECTROMETRY [LARGE SCALE ANALYSIS]</scope>
</reference>
<reference key="11">
    <citation type="journal article" date="2009" name="Sci. Signal.">
        <title>Quantitative phosphoproteomic analysis of T cell receptor signaling reveals system-wide modulation of protein-protein interactions.</title>
        <authorList>
            <person name="Mayya V."/>
            <person name="Lundgren D.H."/>
            <person name="Hwang S.-I."/>
            <person name="Rezaul K."/>
            <person name="Wu L."/>
            <person name="Eng J.K."/>
            <person name="Rodionov V."/>
            <person name="Han D.K."/>
        </authorList>
    </citation>
    <scope>PHOSPHORYLATION [LARGE SCALE ANALYSIS] AT SER-946</scope>
    <scope>IDENTIFICATION BY MASS SPECTROMETRY [LARGE SCALE ANALYSIS]</scope>
    <source>
        <tissue>Leukemic T-cell</tissue>
    </source>
</reference>
<reference key="12">
    <citation type="journal article" date="2010" name="Sci. Signal.">
        <title>Quantitative phosphoproteomics reveals widespread full phosphorylation site occupancy during mitosis.</title>
        <authorList>
            <person name="Olsen J.V."/>
            <person name="Vermeulen M."/>
            <person name="Santamaria A."/>
            <person name="Kumar C."/>
            <person name="Miller M.L."/>
            <person name="Jensen L.J."/>
            <person name="Gnad F."/>
            <person name="Cox J."/>
            <person name="Jensen T.S."/>
            <person name="Nigg E.A."/>
            <person name="Brunak S."/>
            <person name="Mann M."/>
        </authorList>
    </citation>
    <scope>IDENTIFICATION BY MASS SPECTROMETRY [LARGE SCALE ANALYSIS]</scope>
    <source>
        <tissue>Cervix carcinoma</tissue>
    </source>
</reference>
<reference key="13">
    <citation type="journal article" date="2011" name="Stem Cells Dev.">
        <title>Impact of zinc fingers and homeoboxes 3 on the regulation of mesenchymal stem cell osteogenic differentiation.</title>
        <authorList>
            <person name="Suehiro F."/>
            <person name="Nishimura M."/>
            <person name="Kawamoto T."/>
            <person name="Kanawa M."/>
            <person name="Yoshizawa Y."/>
            <person name="Murata H."/>
            <person name="Kato Y."/>
        </authorList>
    </citation>
    <scope>FUNCTION</scope>
    <scope>INDUCTION</scope>
    <scope>TISSUE SPECIFICITY</scope>
</reference>
<reference key="14">
    <citation type="journal article" date="2013" name="J. Proteome Res.">
        <title>Toward a comprehensive characterization of a human cancer cell phosphoproteome.</title>
        <authorList>
            <person name="Zhou H."/>
            <person name="Di Palma S."/>
            <person name="Preisinger C."/>
            <person name="Peng M."/>
            <person name="Polat A.N."/>
            <person name="Heck A.J."/>
            <person name="Mohammed S."/>
        </authorList>
    </citation>
    <scope>PHOSPHORYLATION [LARGE SCALE ANALYSIS] AT SER-599; SER-604; SER-680 AND SER-723</scope>
    <scope>IDENTIFICATION BY MASS SPECTROMETRY [LARGE SCALE ANALYSIS]</scope>
    <source>
        <tissue>Cervix carcinoma</tissue>
        <tissue>Erythroleukemia</tissue>
    </source>
</reference>
<reference key="15">
    <citation type="journal article" date="2014" name="J. Proteomics">
        <title>An enzyme assisted RP-RPLC approach for in-depth analysis of human liver phosphoproteome.</title>
        <authorList>
            <person name="Bian Y."/>
            <person name="Song C."/>
            <person name="Cheng K."/>
            <person name="Dong M."/>
            <person name="Wang F."/>
            <person name="Huang J."/>
            <person name="Sun D."/>
            <person name="Wang L."/>
            <person name="Ye M."/>
            <person name="Zou H."/>
        </authorList>
    </citation>
    <scope>PHOSPHORYLATION [LARGE SCALE ANALYSIS] AT SER-927 AND SER-946</scope>
    <scope>IDENTIFICATION BY MASS SPECTROMETRY [LARGE SCALE ANALYSIS]</scope>
    <source>
        <tissue>Liver</tissue>
    </source>
</reference>
<reference key="16">
    <citation type="submission" date="2006-06" db="PDB data bank">
        <title>Solution structure of the homeobox domain of zinc fingers and homeoboxes protein 3 (triple homeobox 1 protein).</title>
        <authorList>
            <consortium name="RIKEN structural genomics initiative (RSGI)"/>
        </authorList>
    </citation>
    <scope>STRUCTURE BY NMR OF 494-675</scope>
</reference>
<reference key="17">
    <citation type="submission" date="2009-02" db="PDB data bank">
        <title>Solution structure of the second homeobox domain of human zinc fingers and homeoboxes protein 3.</title>
        <authorList>
            <consortium name="RIKEN structural genomics initiative (RSGI)"/>
        </authorList>
    </citation>
    <scope>STRUCTURE BY NMR OF 494-556</scope>
</reference>